<dbReference type="EC" id="4.2.1.2" evidence="1"/>
<dbReference type="EMBL" id="AE014075">
    <property type="protein sequence ID" value="AAN80529.1"/>
    <property type="molecule type" value="Genomic_DNA"/>
</dbReference>
<dbReference type="RefSeq" id="WP_000528342.1">
    <property type="nucleotide sequence ID" value="NZ_CP051263.1"/>
</dbReference>
<dbReference type="SMR" id="P0ACX6"/>
<dbReference type="STRING" id="199310.c2069"/>
<dbReference type="GeneID" id="93775830"/>
<dbReference type="KEGG" id="ecc:c2069"/>
<dbReference type="eggNOG" id="ENOG5032THM">
    <property type="taxonomic scope" value="Bacteria"/>
</dbReference>
<dbReference type="HOGENOM" id="CLU_2755438_0_0_6"/>
<dbReference type="BioCyc" id="ECOL199310:C2069-MONOMER"/>
<dbReference type="Proteomes" id="UP000001410">
    <property type="component" value="Chromosome"/>
</dbReference>
<dbReference type="GO" id="GO:0004333">
    <property type="term" value="F:fumarate hydratase activity"/>
    <property type="evidence" value="ECO:0007669"/>
    <property type="project" value="UniProtKB-EC"/>
</dbReference>
<dbReference type="InterPro" id="IPR024493">
    <property type="entry name" value="FumD"/>
</dbReference>
<dbReference type="NCBIfam" id="NF007630">
    <property type="entry name" value="PRK10292.1"/>
    <property type="match status" value="1"/>
</dbReference>
<dbReference type="Pfam" id="PF10965">
    <property type="entry name" value="DUF2767"/>
    <property type="match status" value="1"/>
</dbReference>
<organism>
    <name type="scientific">Escherichia coli O6:H1 (strain CFT073 / ATCC 700928 / UPEC)</name>
    <dbReference type="NCBI Taxonomy" id="199310"/>
    <lineage>
        <taxon>Bacteria</taxon>
        <taxon>Pseudomonadati</taxon>
        <taxon>Pseudomonadota</taxon>
        <taxon>Gammaproteobacteria</taxon>
        <taxon>Enterobacterales</taxon>
        <taxon>Enterobacteriaceae</taxon>
        <taxon>Escherichia</taxon>
    </lineage>
</organism>
<proteinExistence type="inferred from homology"/>
<keyword id="KW-0456">Lyase</keyword>
<keyword id="KW-1185">Reference proteome</keyword>
<feature type="chain" id="PRO_0000168984" description="Fumarase D">
    <location>
        <begin position="1"/>
        <end position="69"/>
    </location>
</feature>
<accession>P0ACX6</accession>
<accession>P77274</accession>
<sequence>MGNRTKEDELYREMCRVVGKVVLEMRDLGQEPKHIVIAGVLRTALANKRIQRSELEKQAMETVINALVK</sequence>
<evidence type="ECO:0000250" key="1">
    <source>
        <dbReference type="UniProtKB" id="P0ACX5"/>
    </source>
</evidence>
<evidence type="ECO:0000305" key="2"/>
<name>FUMD_ECOL6</name>
<reference key="1">
    <citation type="journal article" date="2002" name="Proc. Natl. Acad. Sci. U.S.A.">
        <title>Extensive mosaic structure revealed by the complete genome sequence of uropathogenic Escherichia coli.</title>
        <authorList>
            <person name="Welch R.A."/>
            <person name="Burland V."/>
            <person name="Plunkett G. III"/>
            <person name="Redford P."/>
            <person name="Roesch P."/>
            <person name="Rasko D."/>
            <person name="Buckles E.L."/>
            <person name="Liou S.-R."/>
            <person name="Boutin A."/>
            <person name="Hackett J."/>
            <person name="Stroud D."/>
            <person name="Mayhew G.F."/>
            <person name="Rose D.J."/>
            <person name="Zhou S."/>
            <person name="Schwartz D.C."/>
            <person name="Perna N.T."/>
            <person name="Mobley H.L.T."/>
            <person name="Donnenberg M.S."/>
            <person name="Blattner F.R."/>
        </authorList>
    </citation>
    <scope>NUCLEOTIDE SEQUENCE [LARGE SCALE GENOMIC DNA]</scope>
    <source>
        <strain>CFT073 / ATCC 700928 / UPEC</strain>
    </source>
</reference>
<protein>
    <recommendedName>
        <fullName evidence="1">Fumarase D</fullName>
        <ecNumber evidence="1">4.2.1.2</ecNumber>
    </recommendedName>
</protein>
<comment type="function">
    <text evidence="1">In vitro catalyzes the addition of water to fumarate, forming malate. Cannot catalyze the reverse reaction. Cannot use the cis-isomer maleate as substrate.</text>
</comment>
<comment type="catalytic activity">
    <reaction evidence="1">
        <text>(S)-malate = fumarate + H2O</text>
        <dbReference type="Rhea" id="RHEA:12460"/>
        <dbReference type="ChEBI" id="CHEBI:15377"/>
        <dbReference type="ChEBI" id="CHEBI:15589"/>
        <dbReference type="ChEBI" id="CHEBI:29806"/>
        <dbReference type="EC" id="4.2.1.2"/>
    </reaction>
</comment>
<comment type="similarity">
    <text evidence="2">Belongs to the FumD family.</text>
</comment>
<gene>
    <name evidence="1" type="primary">fumD</name>
    <name type="synonym">ydhZ</name>
    <name type="ordered locus">c2069</name>
</gene>